<name>TKT_MYCGE</name>
<reference key="1">
    <citation type="journal article" date="1995" name="Science">
        <title>The minimal gene complement of Mycoplasma genitalium.</title>
        <authorList>
            <person name="Fraser C.M."/>
            <person name="Gocayne J.D."/>
            <person name="White O."/>
            <person name="Adams M.D."/>
            <person name="Clayton R.A."/>
            <person name="Fleischmann R.D."/>
            <person name="Bult C.J."/>
            <person name="Kerlavage A.R."/>
            <person name="Sutton G.G."/>
            <person name="Kelley J.M."/>
            <person name="Fritchman J.L."/>
            <person name="Weidman J.F."/>
            <person name="Small K.V."/>
            <person name="Sandusky M."/>
            <person name="Fuhrmann J.L."/>
            <person name="Nguyen D.T."/>
            <person name="Utterback T.R."/>
            <person name="Saudek D.M."/>
            <person name="Phillips C.A."/>
            <person name="Merrick J.M."/>
            <person name="Tomb J.-F."/>
            <person name="Dougherty B.A."/>
            <person name="Bott K.F."/>
            <person name="Hu P.-C."/>
            <person name="Lucier T.S."/>
            <person name="Peterson S.N."/>
            <person name="Smith H.O."/>
            <person name="Hutchison C.A. III"/>
            <person name="Venter J.C."/>
        </authorList>
    </citation>
    <scope>NUCLEOTIDE SEQUENCE [LARGE SCALE GENOMIC DNA]</scope>
    <source>
        <strain>ATCC 33530 / DSM 19775 / NCTC 10195 / G37</strain>
    </source>
</reference>
<reference key="2">
    <citation type="journal article" date="1993" name="J. Bacteriol.">
        <title>A survey of the Mycoplasma genitalium genome by using random sequencing.</title>
        <authorList>
            <person name="Peterson S.N."/>
            <person name="Hu P.-C."/>
            <person name="Bott K.F."/>
            <person name="Hutchison C.A. III"/>
        </authorList>
    </citation>
    <scope>NUCLEOTIDE SEQUENCE [GENOMIC DNA] OF 1-42</scope>
    <source>
        <strain>ATCC 33530 / DSM 19775 / NCTC 10195 / G37</strain>
    </source>
</reference>
<dbReference type="EC" id="2.2.1.1"/>
<dbReference type="EMBL" id="L43967">
    <property type="protein sequence ID" value="AAC71284.1"/>
    <property type="molecule type" value="Genomic_DNA"/>
</dbReference>
<dbReference type="EMBL" id="U02154">
    <property type="protein sequence ID" value="AAD12435.1"/>
    <property type="molecule type" value="Genomic_DNA"/>
</dbReference>
<dbReference type="PIR" id="C64207">
    <property type="entry name" value="C64207"/>
</dbReference>
<dbReference type="RefSeq" id="WP_010869316.1">
    <property type="nucleotide sequence ID" value="NC_000908.2"/>
</dbReference>
<dbReference type="SMR" id="P47312"/>
<dbReference type="FunCoup" id="P47312">
    <property type="interactions" value="142"/>
</dbReference>
<dbReference type="STRING" id="243273.MG_066"/>
<dbReference type="GeneID" id="88282185"/>
<dbReference type="KEGG" id="mge:MG_066"/>
<dbReference type="eggNOG" id="COG0021">
    <property type="taxonomic scope" value="Bacteria"/>
</dbReference>
<dbReference type="HOGENOM" id="CLU_009227_0_0_14"/>
<dbReference type="InParanoid" id="P47312"/>
<dbReference type="OrthoDB" id="8732661at2"/>
<dbReference type="BioCyc" id="MGEN243273:G1GJ2-71-MONOMER"/>
<dbReference type="Proteomes" id="UP000000807">
    <property type="component" value="Chromosome"/>
</dbReference>
<dbReference type="GO" id="GO:0005829">
    <property type="term" value="C:cytosol"/>
    <property type="evidence" value="ECO:0000318"/>
    <property type="project" value="GO_Central"/>
</dbReference>
<dbReference type="GO" id="GO:0046872">
    <property type="term" value="F:metal ion binding"/>
    <property type="evidence" value="ECO:0007669"/>
    <property type="project" value="UniProtKB-KW"/>
</dbReference>
<dbReference type="GO" id="GO:0004802">
    <property type="term" value="F:transketolase activity"/>
    <property type="evidence" value="ECO:0000318"/>
    <property type="project" value="GO_Central"/>
</dbReference>
<dbReference type="GO" id="GO:0006098">
    <property type="term" value="P:pentose-phosphate shunt"/>
    <property type="evidence" value="ECO:0000318"/>
    <property type="project" value="GO_Central"/>
</dbReference>
<dbReference type="CDD" id="cd07033">
    <property type="entry name" value="TPP_PYR_DXS_TK_like"/>
    <property type="match status" value="1"/>
</dbReference>
<dbReference type="CDD" id="cd02012">
    <property type="entry name" value="TPP_TK"/>
    <property type="match status" value="1"/>
</dbReference>
<dbReference type="FunFam" id="3.40.50.970:FF:000045">
    <property type="entry name" value="Transketolase"/>
    <property type="match status" value="1"/>
</dbReference>
<dbReference type="FunFam" id="3.40.50.970:FF:000081">
    <property type="entry name" value="Transketolase"/>
    <property type="match status" value="1"/>
</dbReference>
<dbReference type="Gene3D" id="3.40.50.920">
    <property type="match status" value="1"/>
</dbReference>
<dbReference type="Gene3D" id="3.40.50.970">
    <property type="match status" value="2"/>
</dbReference>
<dbReference type="InterPro" id="IPR029061">
    <property type="entry name" value="THDP-binding"/>
</dbReference>
<dbReference type="InterPro" id="IPR009014">
    <property type="entry name" value="Transketo_C/PFOR_II"/>
</dbReference>
<dbReference type="InterPro" id="IPR055152">
    <property type="entry name" value="Transketolase-like_C_2"/>
</dbReference>
<dbReference type="InterPro" id="IPR005475">
    <property type="entry name" value="Transketolase-like_Pyr-bd"/>
</dbReference>
<dbReference type="InterPro" id="IPR005478">
    <property type="entry name" value="Transketolase_bac-like"/>
</dbReference>
<dbReference type="InterPro" id="IPR020826">
    <property type="entry name" value="Transketolase_BS"/>
</dbReference>
<dbReference type="InterPro" id="IPR033247">
    <property type="entry name" value="Transketolase_fam"/>
</dbReference>
<dbReference type="InterPro" id="IPR005474">
    <property type="entry name" value="Transketolase_N"/>
</dbReference>
<dbReference type="NCBIfam" id="NF004558">
    <property type="entry name" value="PRK05899.2-4"/>
    <property type="match status" value="1"/>
</dbReference>
<dbReference type="NCBIfam" id="TIGR00232">
    <property type="entry name" value="tktlase_bact"/>
    <property type="match status" value="1"/>
</dbReference>
<dbReference type="PANTHER" id="PTHR43522">
    <property type="entry name" value="TRANSKETOLASE"/>
    <property type="match status" value="1"/>
</dbReference>
<dbReference type="PANTHER" id="PTHR43522:SF2">
    <property type="entry name" value="TRANSKETOLASE 1-RELATED"/>
    <property type="match status" value="1"/>
</dbReference>
<dbReference type="Pfam" id="PF02779">
    <property type="entry name" value="Transket_pyr"/>
    <property type="match status" value="1"/>
</dbReference>
<dbReference type="Pfam" id="PF22613">
    <property type="entry name" value="Transketolase_C_1"/>
    <property type="match status" value="1"/>
</dbReference>
<dbReference type="Pfam" id="PF00456">
    <property type="entry name" value="Transketolase_N"/>
    <property type="match status" value="1"/>
</dbReference>
<dbReference type="SMART" id="SM00861">
    <property type="entry name" value="Transket_pyr"/>
    <property type="match status" value="1"/>
</dbReference>
<dbReference type="SUPFAM" id="SSF52518">
    <property type="entry name" value="Thiamin diphosphate-binding fold (THDP-binding)"/>
    <property type="match status" value="2"/>
</dbReference>
<dbReference type="SUPFAM" id="SSF52922">
    <property type="entry name" value="TK C-terminal domain-like"/>
    <property type="match status" value="1"/>
</dbReference>
<dbReference type="PROSITE" id="PS00802">
    <property type="entry name" value="TRANSKETOLASE_2"/>
    <property type="match status" value="1"/>
</dbReference>
<sequence length="648" mass="73785">MKYLYATQHLTLNAIKHAKGGHVGMAIGASPILFSLFTKHFHFDPDQPKWINRDRFVLSAGHGSMALYSIFHFAGLISKQEILQHKHGQINTSSHPEYAPNNFIDASTGPLGQGFGMAVGMVLAQKLLANEFKELSDKLFDHYTYVVVGDGDLQEGVSYEVSQIAGLYKLNKLIVLHDSNRVQMDSEVKKVANENLKVRFENVGWNYIHTDDQLENIDQAIIKAKQSDKPTFIEVRTTIAKNTHLEDQYGGHWFIPNEVDFQLFEKRTNTNFNFFNYPDSIYHWFKQTVIERQKQIKEDYNNLLISLKDKPLFKKFTNWIDSDFQALYLNQLDEKKVAKKDSATRNYLKDFLNQINNPNSNLYCLNADVSRSCFIKIGDDNLHENPCSRNIQIGIREFAMATIMNGMALHGGIKVMGGTFLAFADYSKPAIRLGALMNLPVFYVYTHDSYQVGGDGPTHQPYDQLPMLRAIENVCVFRPCDEKETCAGFNYGLLSQDQTTVLVLTRQPLKSIDNTDSLKTLKGGYILLDRKQPDLIIAASGSEVQLAIEFEKVLTKQNVKVRILSVPNITLLLKQDEKYLKSLFDANSSLITIEASSSYEWFCFKKYVKNHAHLGAFSFGESDDGDKVYQQKGFNLERLMKIFTSLRN</sequence>
<gene>
    <name type="primary">tkt</name>
    <name type="synonym">tktA</name>
    <name type="ordered locus">MG066</name>
</gene>
<feature type="chain" id="PRO_0000191859" description="Transketolase">
    <location>
        <begin position="1"/>
        <end position="648"/>
    </location>
</feature>
<feature type="active site" description="Proton donor" evidence="1">
    <location>
        <position position="397"/>
    </location>
</feature>
<feature type="binding site" evidence="1">
    <location>
        <position position="22"/>
    </location>
    <ligand>
        <name>substrate</name>
    </ligand>
</feature>
<feature type="binding site" evidence="1">
    <location>
        <position position="62"/>
    </location>
    <ligand>
        <name>thiamine diphosphate</name>
        <dbReference type="ChEBI" id="CHEBI:58937"/>
    </ligand>
</feature>
<feature type="binding site" evidence="1">
    <location>
        <begin position="109"/>
        <end position="111"/>
    </location>
    <ligand>
        <name>thiamine diphosphate</name>
        <dbReference type="ChEBI" id="CHEBI:58937"/>
    </ligand>
</feature>
<feature type="binding site" evidence="1">
    <location>
        <position position="150"/>
    </location>
    <ligand>
        <name>Mg(2+)</name>
        <dbReference type="ChEBI" id="CHEBI:18420"/>
    </ligand>
</feature>
<feature type="binding site" evidence="1">
    <location>
        <position position="151"/>
    </location>
    <ligand>
        <name>thiamine diphosphate</name>
        <dbReference type="ChEBI" id="CHEBI:58937"/>
    </ligand>
</feature>
<feature type="binding site" evidence="1">
    <location>
        <position position="180"/>
    </location>
    <ligand>
        <name>Mg(2+)</name>
        <dbReference type="ChEBI" id="CHEBI:18420"/>
    </ligand>
</feature>
<feature type="binding site" evidence="1">
    <location>
        <position position="180"/>
    </location>
    <ligand>
        <name>thiamine diphosphate</name>
        <dbReference type="ChEBI" id="CHEBI:58937"/>
    </ligand>
</feature>
<feature type="binding site" evidence="1">
    <location>
        <position position="182"/>
    </location>
    <ligand>
        <name>Mg(2+)</name>
        <dbReference type="ChEBI" id="CHEBI:18420"/>
    </ligand>
</feature>
<feature type="binding site" evidence="1">
    <location>
        <position position="252"/>
    </location>
    <ligand>
        <name>substrate</name>
    </ligand>
</feature>
<feature type="binding site" evidence="1">
    <location>
        <position position="252"/>
    </location>
    <ligand>
        <name>thiamine diphosphate</name>
        <dbReference type="ChEBI" id="CHEBI:58937"/>
    </ligand>
</feature>
<feature type="binding site" evidence="1">
    <location>
        <position position="345"/>
    </location>
    <ligand>
        <name>substrate</name>
    </ligand>
</feature>
<feature type="binding site" evidence="1">
    <location>
        <position position="372"/>
    </location>
    <ligand>
        <name>substrate</name>
    </ligand>
</feature>
<feature type="binding site" evidence="1">
    <location>
        <position position="423"/>
    </location>
    <ligand>
        <name>thiamine diphosphate</name>
        <dbReference type="ChEBI" id="CHEBI:58937"/>
    </ligand>
</feature>
<feature type="binding site" evidence="1">
    <location>
        <position position="447"/>
    </location>
    <ligand>
        <name>substrate</name>
    </ligand>
</feature>
<feature type="binding site" evidence="1">
    <location>
        <position position="455"/>
    </location>
    <ligand>
        <name>substrate</name>
    </ligand>
</feature>
<feature type="binding site" evidence="1">
    <location>
        <position position="506"/>
    </location>
    <ligand>
        <name>substrate</name>
    </ligand>
</feature>
<feature type="site" description="Important for catalytic activity" evidence="1">
    <location>
        <position position="22"/>
    </location>
</feature>
<feature type="site" description="Important for catalytic activity" evidence="1">
    <location>
        <position position="252"/>
    </location>
</feature>
<feature type="sequence conflict" description="In Ref. 2; AAD12435." evidence="2" ref="2">
    <original>G</original>
    <variation>C</variation>
    <location>
        <position position="24"/>
    </location>
</feature>
<protein>
    <recommendedName>
        <fullName>Transketolase</fullName>
        <shortName>TK</shortName>
        <ecNumber>2.2.1.1</ecNumber>
    </recommendedName>
</protein>
<comment type="function">
    <text evidence="1">Catalyzes the transfer of a two-carbon ketol group from a ketose donor to an aldose acceptor, via a covalent intermediate with the cofactor thiamine pyrophosphate.</text>
</comment>
<comment type="catalytic activity">
    <reaction>
        <text>D-sedoheptulose 7-phosphate + D-glyceraldehyde 3-phosphate = aldehydo-D-ribose 5-phosphate + D-xylulose 5-phosphate</text>
        <dbReference type="Rhea" id="RHEA:10508"/>
        <dbReference type="ChEBI" id="CHEBI:57483"/>
        <dbReference type="ChEBI" id="CHEBI:57737"/>
        <dbReference type="ChEBI" id="CHEBI:58273"/>
        <dbReference type="ChEBI" id="CHEBI:59776"/>
        <dbReference type="EC" id="2.2.1.1"/>
    </reaction>
</comment>
<comment type="cofactor">
    <cofactor evidence="1">
        <name>Mg(2+)</name>
        <dbReference type="ChEBI" id="CHEBI:18420"/>
    </cofactor>
    <cofactor evidence="1">
        <name>Ca(2+)</name>
        <dbReference type="ChEBI" id="CHEBI:29108"/>
    </cofactor>
    <cofactor evidence="1">
        <name>Mn(2+)</name>
        <dbReference type="ChEBI" id="CHEBI:29035"/>
    </cofactor>
    <cofactor evidence="1">
        <name>Co(2+)</name>
        <dbReference type="ChEBI" id="CHEBI:48828"/>
    </cofactor>
    <text evidence="1">Binds 1 Mg(2+) ion per subunit. Can also utilize other divalent metal cations, such as Ca(2+), Mn(2+) and Co(2+).</text>
</comment>
<comment type="cofactor">
    <cofactor evidence="1">
        <name>thiamine diphosphate</name>
        <dbReference type="ChEBI" id="CHEBI:58937"/>
    </cofactor>
    <text evidence="1">Binds 1 thiamine pyrophosphate per subunit.</text>
</comment>
<comment type="subunit">
    <text evidence="1">Homodimer.</text>
</comment>
<comment type="similarity">
    <text evidence="2">Belongs to the transketolase family.</text>
</comment>
<organism>
    <name type="scientific">Mycoplasma genitalium (strain ATCC 33530 / DSM 19775 / NCTC 10195 / G37)</name>
    <name type="common">Mycoplasmoides genitalium</name>
    <dbReference type="NCBI Taxonomy" id="243273"/>
    <lineage>
        <taxon>Bacteria</taxon>
        <taxon>Bacillati</taxon>
        <taxon>Mycoplasmatota</taxon>
        <taxon>Mycoplasmoidales</taxon>
        <taxon>Mycoplasmoidaceae</taxon>
        <taxon>Mycoplasmoides</taxon>
    </lineage>
</organism>
<keyword id="KW-0106">Calcium</keyword>
<keyword id="KW-0460">Magnesium</keyword>
<keyword id="KW-0479">Metal-binding</keyword>
<keyword id="KW-1185">Reference proteome</keyword>
<keyword id="KW-0786">Thiamine pyrophosphate</keyword>
<keyword id="KW-0808">Transferase</keyword>
<accession>P47312</accession>
<accession>Q49280</accession>
<proteinExistence type="inferred from homology"/>
<evidence type="ECO:0000250" key="1"/>
<evidence type="ECO:0000305" key="2"/>